<accession>A3N6K6</accession>
<comment type="similarity">
    <text evidence="1">Belongs to the UPF0434 family.</text>
</comment>
<organism>
    <name type="scientific">Burkholderia pseudomallei (strain 668)</name>
    <dbReference type="NCBI Taxonomy" id="320373"/>
    <lineage>
        <taxon>Bacteria</taxon>
        <taxon>Pseudomonadati</taxon>
        <taxon>Pseudomonadota</taxon>
        <taxon>Betaproteobacteria</taxon>
        <taxon>Burkholderiales</taxon>
        <taxon>Burkholderiaceae</taxon>
        <taxon>Burkholderia</taxon>
        <taxon>pseudomallei group</taxon>
    </lineage>
</organism>
<gene>
    <name type="ordered locus">BURPS668_0926</name>
</gene>
<proteinExistence type="inferred from homology"/>
<evidence type="ECO:0000255" key="1">
    <source>
        <dbReference type="HAMAP-Rule" id="MF_01187"/>
    </source>
</evidence>
<sequence>MDARLLEILVCPICKGPLHYDRGAQELVCHADKLAYPIRDGIPVMLVDEARQTVEGTPVDPAGPAQGR</sequence>
<protein>
    <recommendedName>
        <fullName evidence="1">UPF0434 protein BURPS668_0926</fullName>
    </recommendedName>
</protein>
<reference key="1">
    <citation type="journal article" date="2010" name="Genome Biol. Evol.">
        <title>Continuing evolution of Burkholderia mallei through genome reduction and large-scale rearrangements.</title>
        <authorList>
            <person name="Losada L."/>
            <person name="Ronning C.M."/>
            <person name="DeShazer D."/>
            <person name="Woods D."/>
            <person name="Fedorova N."/>
            <person name="Kim H.S."/>
            <person name="Shabalina S.A."/>
            <person name="Pearson T.R."/>
            <person name="Brinkac L."/>
            <person name="Tan P."/>
            <person name="Nandi T."/>
            <person name="Crabtree J."/>
            <person name="Badger J."/>
            <person name="Beckstrom-Sternberg S."/>
            <person name="Saqib M."/>
            <person name="Schutzer S.E."/>
            <person name="Keim P."/>
            <person name="Nierman W.C."/>
        </authorList>
    </citation>
    <scope>NUCLEOTIDE SEQUENCE [LARGE SCALE GENOMIC DNA]</scope>
    <source>
        <strain>668</strain>
    </source>
</reference>
<name>Y926_BURP6</name>
<feature type="chain" id="PRO_1000065835" description="UPF0434 protein BURPS668_0926">
    <location>
        <begin position="1"/>
        <end position="68"/>
    </location>
</feature>
<dbReference type="EMBL" id="CP000570">
    <property type="protein sequence ID" value="ABN82679.1"/>
    <property type="molecule type" value="Genomic_DNA"/>
</dbReference>
<dbReference type="RefSeq" id="WP_009929235.1">
    <property type="nucleotide sequence ID" value="NC_009074.1"/>
</dbReference>
<dbReference type="SMR" id="A3N6K6"/>
<dbReference type="KEGG" id="bpd:BURPS668_0926"/>
<dbReference type="HOGENOM" id="CLU_155659_3_0_4"/>
<dbReference type="GO" id="GO:0005829">
    <property type="term" value="C:cytosol"/>
    <property type="evidence" value="ECO:0007669"/>
    <property type="project" value="TreeGrafter"/>
</dbReference>
<dbReference type="FunFam" id="2.20.25.10:FF:000002">
    <property type="entry name" value="UPF0434 protein YcaR"/>
    <property type="match status" value="1"/>
</dbReference>
<dbReference type="Gene3D" id="2.20.25.10">
    <property type="match status" value="1"/>
</dbReference>
<dbReference type="HAMAP" id="MF_01187">
    <property type="entry name" value="UPF0434"/>
    <property type="match status" value="1"/>
</dbReference>
<dbReference type="InterPro" id="IPR005651">
    <property type="entry name" value="Trm112-like"/>
</dbReference>
<dbReference type="NCBIfam" id="TIGR01053">
    <property type="entry name" value="LSD1"/>
    <property type="match status" value="1"/>
</dbReference>
<dbReference type="PANTHER" id="PTHR33505:SF4">
    <property type="entry name" value="PROTEIN PREY, MITOCHONDRIAL"/>
    <property type="match status" value="1"/>
</dbReference>
<dbReference type="PANTHER" id="PTHR33505">
    <property type="entry name" value="ZGC:162634"/>
    <property type="match status" value="1"/>
</dbReference>
<dbReference type="Pfam" id="PF03966">
    <property type="entry name" value="Trm112p"/>
    <property type="match status" value="1"/>
</dbReference>
<dbReference type="SUPFAM" id="SSF158997">
    <property type="entry name" value="Trm112p-like"/>
    <property type="match status" value="1"/>
</dbReference>